<feature type="chain" id="PRO_0000360641" description="ICEBs1 excisionase">
    <location>
        <begin position="1"/>
        <end position="64"/>
    </location>
</feature>
<keyword id="KW-0229">DNA integration</keyword>
<keyword id="KW-0233">DNA recombination</keyword>
<keyword id="KW-0238">DNA-binding</keyword>
<keyword id="KW-1185">Reference proteome</keyword>
<name>XIS_BACSU</name>
<comment type="function">
    <text evidence="3">Required for the excision of the integrative and conjugative element ICEBs1. Excision of ICEBs1 requires two sites, attL and attR, at the left and right ends of the integrated ICEBs1.</text>
</comment>
<comment type="induction">
    <text evidence="1 2">Constitutively expressed at very low levels. Induced in response to overproduction of RapI or treatment with DNA-damaging agent mitomycin C (MMC).</text>
</comment>
<sequence length="64" mass="7309">MKGEFLTARDIQKILGVKQAKSYDIIRTLNAQMKEEGYMVIQGKVSRAKFEECYCYKGPKSQTG</sequence>
<protein>
    <recommendedName>
        <fullName>ICEBs1 excisionase</fullName>
    </recommendedName>
    <alternativeName>
        <fullName>Recombination directionality factor xis</fullName>
    </alternativeName>
</protein>
<evidence type="ECO:0000269" key="1">
    <source>
    </source>
</evidence>
<evidence type="ECO:0000269" key="2">
    <source>
    </source>
</evidence>
<evidence type="ECO:0000269" key="3">
    <source>
    </source>
</evidence>
<accession>O31490</accession>
<gene>
    <name type="primary">xis</name>
    <name type="synonym">sacV</name>
    <name type="ordered locus">BSU04830</name>
</gene>
<dbReference type="EMBL" id="AL009126">
    <property type="protein sequence ID" value="CAB12290.1"/>
    <property type="molecule type" value="Genomic_DNA"/>
</dbReference>
<dbReference type="PIR" id="D69703">
    <property type="entry name" value="D69703"/>
</dbReference>
<dbReference type="RefSeq" id="NP_388364.1">
    <property type="nucleotide sequence ID" value="NC_000964.3"/>
</dbReference>
<dbReference type="RefSeq" id="WP_003240395.1">
    <property type="nucleotide sequence ID" value="NZ_OZ025638.1"/>
</dbReference>
<dbReference type="FunCoup" id="O31490">
    <property type="interactions" value="41"/>
</dbReference>
<dbReference type="STRING" id="224308.BSU04830"/>
<dbReference type="TCDB" id="3.A.7.14.3">
    <property type="family name" value="the type iv (conjugal dna-protein transfer or virb) secretory pathway (ivsp) family"/>
</dbReference>
<dbReference type="PaxDb" id="224308-BSU04830"/>
<dbReference type="EnsemblBacteria" id="CAB12290">
    <property type="protein sequence ID" value="CAB12290"/>
    <property type="gene ID" value="BSU_04830"/>
</dbReference>
<dbReference type="GeneID" id="939938"/>
<dbReference type="KEGG" id="bsu:BSU04830"/>
<dbReference type="PATRIC" id="fig|224308.179.peg.513"/>
<dbReference type="InParanoid" id="O31490"/>
<dbReference type="OrthoDB" id="3174733at2"/>
<dbReference type="BioCyc" id="BSUB:BSU04830-MONOMER"/>
<dbReference type="Proteomes" id="UP000001570">
    <property type="component" value="Chromosome"/>
</dbReference>
<dbReference type="GO" id="GO:0003677">
    <property type="term" value="F:DNA binding"/>
    <property type="evidence" value="ECO:0007669"/>
    <property type="project" value="UniProtKB-KW"/>
</dbReference>
<dbReference type="GO" id="GO:0015074">
    <property type="term" value="P:DNA integration"/>
    <property type="evidence" value="ECO:0007669"/>
    <property type="project" value="UniProtKB-KW"/>
</dbReference>
<dbReference type="GO" id="GO:0006310">
    <property type="term" value="P:DNA recombination"/>
    <property type="evidence" value="ECO:0007669"/>
    <property type="project" value="UniProtKB-KW"/>
</dbReference>
<dbReference type="NCBIfam" id="NF047858">
    <property type="entry name" value="ICEBs1XisBacil"/>
    <property type="match status" value="1"/>
</dbReference>
<reference key="1">
    <citation type="journal article" date="1997" name="Nature">
        <title>The complete genome sequence of the Gram-positive bacterium Bacillus subtilis.</title>
        <authorList>
            <person name="Kunst F."/>
            <person name="Ogasawara N."/>
            <person name="Moszer I."/>
            <person name="Albertini A.M."/>
            <person name="Alloni G."/>
            <person name="Azevedo V."/>
            <person name="Bertero M.G."/>
            <person name="Bessieres P."/>
            <person name="Bolotin A."/>
            <person name="Borchert S."/>
            <person name="Borriss R."/>
            <person name="Boursier L."/>
            <person name="Brans A."/>
            <person name="Braun M."/>
            <person name="Brignell S.C."/>
            <person name="Bron S."/>
            <person name="Brouillet S."/>
            <person name="Bruschi C.V."/>
            <person name="Caldwell B."/>
            <person name="Capuano V."/>
            <person name="Carter N.M."/>
            <person name="Choi S.-K."/>
            <person name="Codani J.-J."/>
            <person name="Connerton I.F."/>
            <person name="Cummings N.J."/>
            <person name="Daniel R.A."/>
            <person name="Denizot F."/>
            <person name="Devine K.M."/>
            <person name="Duesterhoeft A."/>
            <person name="Ehrlich S.D."/>
            <person name="Emmerson P.T."/>
            <person name="Entian K.-D."/>
            <person name="Errington J."/>
            <person name="Fabret C."/>
            <person name="Ferrari E."/>
            <person name="Foulger D."/>
            <person name="Fritz C."/>
            <person name="Fujita M."/>
            <person name="Fujita Y."/>
            <person name="Fuma S."/>
            <person name="Galizzi A."/>
            <person name="Galleron N."/>
            <person name="Ghim S.-Y."/>
            <person name="Glaser P."/>
            <person name="Goffeau A."/>
            <person name="Golightly E.J."/>
            <person name="Grandi G."/>
            <person name="Guiseppi G."/>
            <person name="Guy B.J."/>
            <person name="Haga K."/>
            <person name="Haiech J."/>
            <person name="Harwood C.R."/>
            <person name="Henaut A."/>
            <person name="Hilbert H."/>
            <person name="Holsappel S."/>
            <person name="Hosono S."/>
            <person name="Hullo M.-F."/>
            <person name="Itaya M."/>
            <person name="Jones L.-M."/>
            <person name="Joris B."/>
            <person name="Karamata D."/>
            <person name="Kasahara Y."/>
            <person name="Klaerr-Blanchard M."/>
            <person name="Klein C."/>
            <person name="Kobayashi Y."/>
            <person name="Koetter P."/>
            <person name="Koningstein G."/>
            <person name="Krogh S."/>
            <person name="Kumano M."/>
            <person name="Kurita K."/>
            <person name="Lapidus A."/>
            <person name="Lardinois S."/>
            <person name="Lauber J."/>
            <person name="Lazarevic V."/>
            <person name="Lee S.-M."/>
            <person name="Levine A."/>
            <person name="Liu H."/>
            <person name="Masuda S."/>
            <person name="Mauel C."/>
            <person name="Medigue C."/>
            <person name="Medina N."/>
            <person name="Mellado R.P."/>
            <person name="Mizuno M."/>
            <person name="Moestl D."/>
            <person name="Nakai S."/>
            <person name="Noback M."/>
            <person name="Noone D."/>
            <person name="O'Reilly M."/>
            <person name="Ogawa K."/>
            <person name="Ogiwara A."/>
            <person name="Oudega B."/>
            <person name="Park S.-H."/>
            <person name="Parro V."/>
            <person name="Pohl T.M."/>
            <person name="Portetelle D."/>
            <person name="Porwollik S."/>
            <person name="Prescott A.M."/>
            <person name="Presecan E."/>
            <person name="Pujic P."/>
            <person name="Purnelle B."/>
            <person name="Rapoport G."/>
            <person name="Rey M."/>
            <person name="Reynolds S."/>
            <person name="Rieger M."/>
            <person name="Rivolta C."/>
            <person name="Rocha E."/>
            <person name="Roche B."/>
            <person name="Rose M."/>
            <person name="Sadaie Y."/>
            <person name="Sato T."/>
            <person name="Scanlan E."/>
            <person name="Schleich S."/>
            <person name="Schroeter R."/>
            <person name="Scoffone F."/>
            <person name="Sekiguchi J."/>
            <person name="Sekowska A."/>
            <person name="Seror S.J."/>
            <person name="Serror P."/>
            <person name="Shin B.-S."/>
            <person name="Soldo B."/>
            <person name="Sorokin A."/>
            <person name="Tacconi E."/>
            <person name="Takagi T."/>
            <person name="Takahashi H."/>
            <person name="Takemaru K."/>
            <person name="Takeuchi M."/>
            <person name="Tamakoshi A."/>
            <person name="Tanaka T."/>
            <person name="Terpstra P."/>
            <person name="Tognoni A."/>
            <person name="Tosato V."/>
            <person name="Uchiyama S."/>
            <person name="Vandenbol M."/>
            <person name="Vannier F."/>
            <person name="Vassarotti A."/>
            <person name="Viari A."/>
            <person name="Wambutt R."/>
            <person name="Wedler E."/>
            <person name="Wedler H."/>
            <person name="Weitzenegger T."/>
            <person name="Winters P."/>
            <person name="Wipat A."/>
            <person name="Yamamoto H."/>
            <person name="Yamane K."/>
            <person name="Yasumoto K."/>
            <person name="Yata K."/>
            <person name="Yoshida K."/>
            <person name="Yoshikawa H.-F."/>
            <person name="Zumstein E."/>
            <person name="Yoshikawa H."/>
            <person name="Danchin A."/>
        </authorList>
    </citation>
    <scope>NUCLEOTIDE SEQUENCE [LARGE SCALE GENOMIC DNA]</scope>
    <source>
        <strain>168</strain>
    </source>
</reference>
<reference key="2">
    <citation type="journal article" date="2007" name="Mol. Microbiol.">
        <title>Identification and characterization of int (integrase), xis (excisionase) and chromosomal attachment sites of the integrative and conjugative element ICEBs1 of Bacillus subtilis.</title>
        <authorList>
            <person name="Lee C.A."/>
            <person name="Auchtung J.M."/>
            <person name="Monson R.E."/>
            <person name="Grossman A.D."/>
        </authorList>
    </citation>
    <scope>FUNCTION</scope>
</reference>
<reference key="3">
    <citation type="journal article" date="2005" name="Proc. Natl. Acad. Sci. U.S.A.">
        <title>Regulation of a Bacillus subtilis mobile genetic element by intercellular signaling and the global DNA damage response.</title>
        <authorList>
            <person name="Auchtung J.M."/>
            <person name="Lee C.A."/>
            <person name="Monson R.E."/>
            <person name="Lehman A.P."/>
            <person name="Grossman A.D."/>
        </authorList>
    </citation>
    <scope>INDUCTION</scope>
</reference>
<reference key="4">
    <citation type="journal article" date="2007" name="Mol. Microbiol.">
        <title>Identification and characterization of the immunity repressor (ImmR) that controls the mobile genetic element ICEBs1 of Bacillus subtilis.</title>
        <authorList>
            <person name="Auchtung J.M."/>
            <person name="Lee C.A."/>
            <person name="Garrison K.L."/>
            <person name="Grossman A.D."/>
        </authorList>
    </citation>
    <scope>INDUCTION</scope>
</reference>
<proteinExistence type="evidence at transcript level"/>
<organism>
    <name type="scientific">Bacillus subtilis (strain 168)</name>
    <dbReference type="NCBI Taxonomy" id="224308"/>
    <lineage>
        <taxon>Bacteria</taxon>
        <taxon>Bacillati</taxon>
        <taxon>Bacillota</taxon>
        <taxon>Bacilli</taxon>
        <taxon>Bacillales</taxon>
        <taxon>Bacillaceae</taxon>
        <taxon>Bacillus</taxon>
    </lineage>
</organism>